<feature type="chain" id="PRO_0000322266" description="Small ribosomal subunit protein uS4">
    <location>
        <begin position="1"/>
        <end position="200"/>
    </location>
</feature>
<feature type="domain" description="S4 RNA-binding" evidence="1">
    <location>
        <begin position="92"/>
        <end position="152"/>
    </location>
</feature>
<feature type="region of interest" description="Disordered" evidence="2">
    <location>
        <begin position="22"/>
        <end position="42"/>
    </location>
</feature>
<evidence type="ECO:0000255" key="1">
    <source>
        <dbReference type="HAMAP-Rule" id="MF_01306"/>
    </source>
</evidence>
<evidence type="ECO:0000256" key="2">
    <source>
        <dbReference type="SAM" id="MobiDB-lite"/>
    </source>
</evidence>
<evidence type="ECO:0000305" key="3"/>
<sequence length="200" mass="23027">MARYTGPAWKLSRRLGISLSGTGKELEKRPYAPGPHGPNQRKKLSEYGLQLQEKQKLRHMYGMTERQFRRTFDQAGKMPGKHGENFMILLEARLDNLVYRMGLARTRRAARQLVNHGHIMVDGARVDIPSYRVKPGQTISVREKSRNLAVIKEAMEVNNFVPEYLTFDADKLEATFTRHAERAELPAEINEALIVEFYSR</sequence>
<keyword id="KW-0687">Ribonucleoprotein</keyword>
<keyword id="KW-0689">Ribosomal protein</keyword>
<keyword id="KW-0694">RNA-binding</keyword>
<keyword id="KW-0699">rRNA-binding</keyword>
<organism>
    <name type="scientific">Bacillus cytotoxicus (strain DSM 22905 / CIP 110041 / 391-98 / NVH 391-98)</name>
    <dbReference type="NCBI Taxonomy" id="315749"/>
    <lineage>
        <taxon>Bacteria</taxon>
        <taxon>Bacillati</taxon>
        <taxon>Bacillota</taxon>
        <taxon>Bacilli</taxon>
        <taxon>Bacillales</taxon>
        <taxon>Bacillaceae</taxon>
        <taxon>Bacillus</taxon>
        <taxon>Bacillus cereus group</taxon>
    </lineage>
</organism>
<dbReference type="EMBL" id="CP000764">
    <property type="protein sequence ID" value="ABS23544.1"/>
    <property type="molecule type" value="Genomic_DNA"/>
</dbReference>
<dbReference type="RefSeq" id="WP_012095785.1">
    <property type="nucleotide sequence ID" value="NC_009674.1"/>
</dbReference>
<dbReference type="SMR" id="A7GTT6"/>
<dbReference type="STRING" id="315749.Bcer98_3327"/>
<dbReference type="GeneID" id="33898572"/>
<dbReference type="KEGG" id="bcy:Bcer98_3327"/>
<dbReference type="eggNOG" id="COG0522">
    <property type="taxonomic scope" value="Bacteria"/>
</dbReference>
<dbReference type="HOGENOM" id="CLU_092403_0_1_9"/>
<dbReference type="OrthoDB" id="9803672at2"/>
<dbReference type="Proteomes" id="UP000002300">
    <property type="component" value="Chromosome"/>
</dbReference>
<dbReference type="GO" id="GO:0015935">
    <property type="term" value="C:small ribosomal subunit"/>
    <property type="evidence" value="ECO:0007669"/>
    <property type="project" value="InterPro"/>
</dbReference>
<dbReference type="GO" id="GO:0019843">
    <property type="term" value="F:rRNA binding"/>
    <property type="evidence" value="ECO:0007669"/>
    <property type="project" value="UniProtKB-UniRule"/>
</dbReference>
<dbReference type="GO" id="GO:0003735">
    <property type="term" value="F:structural constituent of ribosome"/>
    <property type="evidence" value="ECO:0007669"/>
    <property type="project" value="InterPro"/>
</dbReference>
<dbReference type="GO" id="GO:0042274">
    <property type="term" value="P:ribosomal small subunit biogenesis"/>
    <property type="evidence" value="ECO:0007669"/>
    <property type="project" value="TreeGrafter"/>
</dbReference>
<dbReference type="GO" id="GO:0006412">
    <property type="term" value="P:translation"/>
    <property type="evidence" value="ECO:0007669"/>
    <property type="project" value="UniProtKB-UniRule"/>
</dbReference>
<dbReference type="CDD" id="cd00165">
    <property type="entry name" value="S4"/>
    <property type="match status" value="1"/>
</dbReference>
<dbReference type="FunFam" id="1.10.1050.10:FF:000001">
    <property type="entry name" value="30S ribosomal protein S4"/>
    <property type="match status" value="1"/>
</dbReference>
<dbReference type="FunFam" id="3.10.290.10:FF:000001">
    <property type="entry name" value="30S ribosomal protein S4"/>
    <property type="match status" value="1"/>
</dbReference>
<dbReference type="Gene3D" id="1.10.1050.10">
    <property type="entry name" value="Ribosomal Protein S4 Delta 41, Chain A, domain 1"/>
    <property type="match status" value="1"/>
</dbReference>
<dbReference type="Gene3D" id="3.10.290.10">
    <property type="entry name" value="RNA-binding S4 domain"/>
    <property type="match status" value="1"/>
</dbReference>
<dbReference type="HAMAP" id="MF_01306_B">
    <property type="entry name" value="Ribosomal_uS4_B"/>
    <property type="match status" value="1"/>
</dbReference>
<dbReference type="InterPro" id="IPR022801">
    <property type="entry name" value="Ribosomal_uS4"/>
</dbReference>
<dbReference type="InterPro" id="IPR005709">
    <property type="entry name" value="Ribosomal_uS4_bac-type"/>
</dbReference>
<dbReference type="InterPro" id="IPR018079">
    <property type="entry name" value="Ribosomal_uS4_CS"/>
</dbReference>
<dbReference type="InterPro" id="IPR001912">
    <property type="entry name" value="Ribosomal_uS4_N"/>
</dbReference>
<dbReference type="InterPro" id="IPR002942">
    <property type="entry name" value="S4_RNA-bd"/>
</dbReference>
<dbReference type="InterPro" id="IPR036986">
    <property type="entry name" value="S4_RNA-bd_sf"/>
</dbReference>
<dbReference type="NCBIfam" id="NF003717">
    <property type="entry name" value="PRK05327.1"/>
    <property type="match status" value="1"/>
</dbReference>
<dbReference type="NCBIfam" id="TIGR01017">
    <property type="entry name" value="rpsD_bact"/>
    <property type="match status" value="1"/>
</dbReference>
<dbReference type="PANTHER" id="PTHR11831">
    <property type="entry name" value="30S 40S RIBOSOMAL PROTEIN"/>
    <property type="match status" value="1"/>
</dbReference>
<dbReference type="PANTHER" id="PTHR11831:SF4">
    <property type="entry name" value="SMALL RIBOSOMAL SUBUNIT PROTEIN US4M"/>
    <property type="match status" value="1"/>
</dbReference>
<dbReference type="Pfam" id="PF00163">
    <property type="entry name" value="Ribosomal_S4"/>
    <property type="match status" value="1"/>
</dbReference>
<dbReference type="Pfam" id="PF01479">
    <property type="entry name" value="S4"/>
    <property type="match status" value="1"/>
</dbReference>
<dbReference type="SMART" id="SM01390">
    <property type="entry name" value="Ribosomal_S4"/>
    <property type="match status" value="1"/>
</dbReference>
<dbReference type="SMART" id="SM00363">
    <property type="entry name" value="S4"/>
    <property type="match status" value="1"/>
</dbReference>
<dbReference type="SUPFAM" id="SSF55174">
    <property type="entry name" value="Alpha-L RNA-binding motif"/>
    <property type="match status" value="1"/>
</dbReference>
<dbReference type="PROSITE" id="PS00632">
    <property type="entry name" value="RIBOSOMAL_S4"/>
    <property type="match status" value="1"/>
</dbReference>
<dbReference type="PROSITE" id="PS50889">
    <property type="entry name" value="S4"/>
    <property type="match status" value="1"/>
</dbReference>
<accession>A7GTT6</accession>
<comment type="function">
    <text evidence="1">One of the primary rRNA binding proteins, it binds directly to 16S rRNA where it nucleates assembly of the body of the 30S subunit.</text>
</comment>
<comment type="function">
    <text evidence="1">With S5 and S12 plays an important role in translational accuracy.</text>
</comment>
<comment type="subunit">
    <text evidence="1">Part of the 30S ribosomal subunit. Contacts protein S5. The interaction surface between S4 and S5 is involved in control of translational fidelity.</text>
</comment>
<comment type="similarity">
    <text evidence="1">Belongs to the universal ribosomal protein uS4 family.</text>
</comment>
<gene>
    <name evidence="1" type="primary">rpsD</name>
    <name type="ordered locus">Bcer98_3327</name>
</gene>
<name>RS4_BACCN</name>
<protein>
    <recommendedName>
        <fullName evidence="1">Small ribosomal subunit protein uS4</fullName>
    </recommendedName>
    <alternativeName>
        <fullName evidence="3">30S ribosomal protein S4</fullName>
    </alternativeName>
</protein>
<proteinExistence type="inferred from homology"/>
<reference key="1">
    <citation type="journal article" date="2008" name="Chem. Biol. Interact.">
        <title>Extending the Bacillus cereus group genomics to putative food-borne pathogens of different toxicity.</title>
        <authorList>
            <person name="Lapidus A."/>
            <person name="Goltsman E."/>
            <person name="Auger S."/>
            <person name="Galleron N."/>
            <person name="Segurens B."/>
            <person name="Dossat C."/>
            <person name="Land M.L."/>
            <person name="Broussolle V."/>
            <person name="Brillard J."/>
            <person name="Guinebretiere M.-H."/>
            <person name="Sanchis V."/>
            <person name="Nguen-the C."/>
            <person name="Lereclus D."/>
            <person name="Richardson P."/>
            <person name="Wincker P."/>
            <person name="Weissenbach J."/>
            <person name="Ehrlich S.D."/>
            <person name="Sorokin A."/>
        </authorList>
    </citation>
    <scope>NUCLEOTIDE SEQUENCE [LARGE SCALE GENOMIC DNA]</scope>
    <source>
        <strain>DSM 22905 / CIP 110041 / 391-98 / NVH 391-98</strain>
    </source>
</reference>